<reference key="1">
    <citation type="submission" date="2006-08" db="EMBL/GenBank/DDBJ databases">
        <title>Complete sequence of Alkalilimnicola ehrilichei MLHE-1.</title>
        <authorList>
            <person name="Copeland A."/>
            <person name="Lucas S."/>
            <person name="Lapidus A."/>
            <person name="Barry K."/>
            <person name="Detter J.C."/>
            <person name="Glavina del Rio T."/>
            <person name="Hammon N."/>
            <person name="Israni S."/>
            <person name="Dalin E."/>
            <person name="Tice H."/>
            <person name="Pitluck S."/>
            <person name="Sims D."/>
            <person name="Brettin T."/>
            <person name="Bruce D."/>
            <person name="Han C."/>
            <person name="Tapia R."/>
            <person name="Gilna P."/>
            <person name="Schmutz J."/>
            <person name="Larimer F."/>
            <person name="Land M."/>
            <person name="Hauser L."/>
            <person name="Kyrpides N."/>
            <person name="Mikhailova N."/>
            <person name="Oremland R.S."/>
            <person name="Hoeft S.E."/>
            <person name="Switzer-Blum J."/>
            <person name="Kulp T."/>
            <person name="King G."/>
            <person name="Tabita R."/>
            <person name="Witte B."/>
            <person name="Santini J.M."/>
            <person name="Basu P."/>
            <person name="Hollibaugh J.T."/>
            <person name="Xie G."/>
            <person name="Stolz J.F."/>
            <person name="Richardson P."/>
        </authorList>
    </citation>
    <scope>NUCLEOTIDE SEQUENCE [LARGE SCALE GENOMIC DNA]</scope>
    <source>
        <strain>ATCC BAA-1101 / DSM 17681 / MLHE-1</strain>
    </source>
</reference>
<sequence>MFDLGFWEVLIIMLIGLLILGPERMARAVRMAGLYMGKARAAFNAAKSEVERELQVEEMRKATESVRKDVDKVRKDVEKNARRFEAEADGVGKTFRDVGRQADDAAKGAASGAGGDDARSAGAGDPSGLTDQRGSDQPPAGGGRTAAGERGEPAEAAPAQQSEDTARKGQGGGGEEKRQ</sequence>
<keyword id="KW-0997">Cell inner membrane</keyword>
<keyword id="KW-1003">Cell membrane</keyword>
<keyword id="KW-0472">Membrane</keyword>
<keyword id="KW-0653">Protein transport</keyword>
<keyword id="KW-1185">Reference proteome</keyword>
<keyword id="KW-0811">Translocation</keyword>
<keyword id="KW-0812">Transmembrane</keyword>
<keyword id="KW-1133">Transmembrane helix</keyword>
<keyword id="KW-0813">Transport</keyword>
<proteinExistence type="inferred from homology"/>
<name>TATB_ALKEH</name>
<gene>
    <name evidence="1" type="primary">tatB</name>
    <name type="ordered locus">Mlg_2611</name>
</gene>
<feature type="chain" id="PRO_0000301140" description="Sec-independent protein translocase protein TatB">
    <location>
        <begin position="1"/>
        <end position="179"/>
    </location>
</feature>
<feature type="transmembrane region" description="Helical" evidence="1">
    <location>
        <begin position="1"/>
        <end position="21"/>
    </location>
</feature>
<feature type="region of interest" description="Disordered" evidence="2">
    <location>
        <begin position="75"/>
        <end position="179"/>
    </location>
</feature>
<feature type="compositionally biased region" description="Basic and acidic residues" evidence="2">
    <location>
        <begin position="75"/>
        <end position="86"/>
    </location>
</feature>
<feature type="compositionally biased region" description="Basic and acidic residues" evidence="2">
    <location>
        <begin position="94"/>
        <end position="106"/>
    </location>
</feature>
<protein>
    <recommendedName>
        <fullName evidence="1">Sec-independent protein translocase protein TatB</fullName>
    </recommendedName>
</protein>
<evidence type="ECO:0000255" key="1">
    <source>
        <dbReference type="HAMAP-Rule" id="MF_00237"/>
    </source>
</evidence>
<evidence type="ECO:0000256" key="2">
    <source>
        <dbReference type="SAM" id="MobiDB-lite"/>
    </source>
</evidence>
<dbReference type="EMBL" id="CP000453">
    <property type="protein sequence ID" value="ABI57951.1"/>
    <property type="molecule type" value="Genomic_DNA"/>
</dbReference>
<dbReference type="RefSeq" id="WP_011630344.1">
    <property type="nucleotide sequence ID" value="NC_008340.1"/>
</dbReference>
<dbReference type="SMR" id="Q0A5D6"/>
<dbReference type="KEGG" id="aeh:Mlg_2611"/>
<dbReference type="eggNOG" id="COG1826">
    <property type="taxonomic scope" value="Bacteria"/>
</dbReference>
<dbReference type="HOGENOM" id="CLU_086034_1_1_6"/>
<dbReference type="OrthoDB" id="9816005at2"/>
<dbReference type="Proteomes" id="UP000001962">
    <property type="component" value="Chromosome"/>
</dbReference>
<dbReference type="GO" id="GO:0033281">
    <property type="term" value="C:TAT protein transport complex"/>
    <property type="evidence" value="ECO:0007669"/>
    <property type="project" value="UniProtKB-UniRule"/>
</dbReference>
<dbReference type="GO" id="GO:0008320">
    <property type="term" value="F:protein transmembrane transporter activity"/>
    <property type="evidence" value="ECO:0007669"/>
    <property type="project" value="UniProtKB-UniRule"/>
</dbReference>
<dbReference type="GO" id="GO:0043953">
    <property type="term" value="P:protein transport by the Tat complex"/>
    <property type="evidence" value="ECO:0007669"/>
    <property type="project" value="UniProtKB-UniRule"/>
</dbReference>
<dbReference type="Gene3D" id="1.20.5.3310">
    <property type="match status" value="1"/>
</dbReference>
<dbReference type="HAMAP" id="MF_00237">
    <property type="entry name" value="TatB"/>
    <property type="match status" value="1"/>
</dbReference>
<dbReference type="InterPro" id="IPR003369">
    <property type="entry name" value="TatA/B/E"/>
</dbReference>
<dbReference type="InterPro" id="IPR018448">
    <property type="entry name" value="TatB"/>
</dbReference>
<dbReference type="NCBIfam" id="TIGR01410">
    <property type="entry name" value="tatB"/>
    <property type="match status" value="1"/>
</dbReference>
<dbReference type="PANTHER" id="PTHR33162">
    <property type="entry name" value="SEC-INDEPENDENT PROTEIN TRANSLOCASE PROTEIN TATA, CHLOROPLASTIC"/>
    <property type="match status" value="1"/>
</dbReference>
<dbReference type="PANTHER" id="PTHR33162:SF1">
    <property type="entry name" value="SEC-INDEPENDENT PROTEIN TRANSLOCASE PROTEIN TATA, CHLOROPLASTIC"/>
    <property type="match status" value="1"/>
</dbReference>
<dbReference type="Pfam" id="PF02416">
    <property type="entry name" value="TatA_B_E"/>
    <property type="match status" value="1"/>
</dbReference>
<dbReference type="PRINTS" id="PR01506">
    <property type="entry name" value="TATBPROTEIN"/>
</dbReference>
<organism>
    <name type="scientific">Alkalilimnicola ehrlichii (strain ATCC BAA-1101 / DSM 17681 / MLHE-1)</name>
    <dbReference type="NCBI Taxonomy" id="187272"/>
    <lineage>
        <taxon>Bacteria</taxon>
        <taxon>Pseudomonadati</taxon>
        <taxon>Pseudomonadota</taxon>
        <taxon>Gammaproteobacteria</taxon>
        <taxon>Chromatiales</taxon>
        <taxon>Ectothiorhodospiraceae</taxon>
        <taxon>Alkalilimnicola</taxon>
    </lineage>
</organism>
<accession>Q0A5D6</accession>
<comment type="function">
    <text evidence="1">Part of the twin-arginine translocation (Tat) system that transports large folded proteins containing a characteristic twin-arginine motif in their signal peptide across membranes. Together with TatC, TatB is part of a receptor directly interacting with Tat signal peptides. TatB may form an oligomeric binding site that transiently accommodates folded Tat precursor proteins before their translocation.</text>
</comment>
<comment type="subunit">
    <text evidence="1">The Tat system comprises two distinct complexes: a TatABC complex, containing multiple copies of TatA, TatB and TatC subunits, and a separate TatA complex, containing only TatA subunits. Substrates initially bind to the TatABC complex, which probably triggers association of the separate TatA complex to form the active translocon.</text>
</comment>
<comment type="subcellular location">
    <subcellularLocation>
        <location evidence="1">Cell inner membrane</location>
        <topology evidence="1">Single-pass membrane protein</topology>
    </subcellularLocation>
</comment>
<comment type="similarity">
    <text evidence="1">Belongs to the TatB family.</text>
</comment>